<sequence length="73" mass="8472">MAKEELVEFGGKVSEVLPDNRFRVILENGFEVWAYSSGRLKKNRIRVLAGDRVTLEMSPYDLTKGRINYRHKS</sequence>
<feature type="chain" id="PRO_0000263851" description="Translation initiation factor IF-1 3">
    <location>
        <begin position="1"/>
        <end position="73"/>
    </location>
</feature>
<feature type="domain" description="S1-like" evidence="1">
    <location>
        <begin position="1"/>
        <end position="72"/>
    </location>
</feature>
<dbReference type="EMBL" id="CP000353">
    <property type="protein sequence ID" value="ABF12035.1"/>
    <property type="molecule type" value="Genomic_DNA"/>
</dbReference>
<dbReference type="SMR" id="Q1LCU1"/>
<dbReference type="KEGG" id="rme:Rmet_5176"/>
<dbReference type="eggNOG" id="COG0361">
    <property type="taxonomic scope" value="Bacteria"/>
</dbReference>
<dbReference type="HOGENOM" id="CLU_151267_4_1_4"/>
<dbReference type="Proteomes" id="UP000002429">
    <property type="component" value="Plasmid megaplasmid CH34"/>
</dbReference>
<dbReference type="GO" id="GO:0005829">
    <property type="term" value="C:cytosol"/>
    <property type="evidence" value="ECO:0007669"/>
    <property type="project" value="TreeGrafter"/>
</dbReference>
<dbReference type="GO" id="GO:0043022">
    <property type="term" value="F:ribosome binding"/>
    <property type="evidence" value="ECO:0007669"/>
    <property type="project" value="UniProtKB-UniRule"/>
</dbReference>
<dbReference type="GO" id="GO:0019843">
    <property type="term" value="F:rRNA binding"/>
    <property type="evidence" value="ECO:0007669"/>
    <property type="project" value="UniProtKB-UniRule"/>
</dbReference>
<dbReference type="GO" id="GO:0003743">
    <property type="term" value="F:translation initiation factor activity"/>
    <property type="evidence" value="ECO:0007669"/>
    <property type="project" value="UniProtKB-UniRule"/>
</dbReference>
<dbReference type="CDD" id="cd04451">
    <property type="entry name" value="S1_IF1"/>
    <property type="match status" value="1"/>
</dbReference>
<dbReference type="FunFam" id="2.40.50.140:FF:000002">
    <property type="entry name" value="Translation initiation factor IF-1"/>
    <property type="match status" value="1"/>
</dbReference>
<dbReference type="Gene3D" id="2.40.50.140">
    <property type="entry name" value="Nucleic acid-binding proteins"/>
    <property type="match status" value="1"/>
</dbReference>
<dbReference type="HAMAP" id="MF_00075">
    <property type="entry name" value="IF_1"/>
    <property type="match status" value="1"/>
</dbReference>
<dbReference type="InterPro" id="IPR012340">
    <property type="entry name" value="NA-bd_OB-fold"/>
</dbReference>
<dbReference type="InterPro" id="IPR006196">
    <property type="entry name" value="RNA-binding_domain_S1_IF1"/>
</dbReference>
<dbReference type="InterPro" id="IPR004368">
    <property type="entry name" value="TIF_IF1"/>
</dbReference>
<dbReference type="NCBIfam" id="TIGR00008">
    <property type="entry name" value="infA"/>
    <property type="match status" value="1"/>
</dbReference>
<dbReference type="PANTHER" id="PTHR33370">
    <property type="entry name" value="TRANSLATION INITIATION FACTOR IF-1, CHLOROPLASTIC"/>
    <property type="match status" value="1"/>
</dbReference>
<dbReference type="PANTHER" id="PTHR33370:SF1">
    <property type="entry name" value="TRANSLATION INITIATION FACTOR IF-1, CHLOROPLASTIC"/>
    <property type="match status" value="1"/>
</dbReference>
<dbReference type="Pfam" id="PF01176">
    <property type="entry name" value="eIF-1a"/>
    <property type="match status" value="1"/>
</dbReference>
<dbReference type="SUPFAM" id="SSF50249">
    <property type="entry name" value="Nucleic acid-binding proteins"/>
    <property type="match status" value="1"/>
</dbReference>
<dbReference type="PROSITE" id="PS50832">
    <property type="entry name" value="S1_IF1_TYPE"/>
    <property type="match status" value="1"/>
</dbReference>
<evidence type="ECO:0000255" key="1">
    <source>
        <dbReference type="HAMAP-Rule" id="MF_00075"/>
    </source>
</evidence>
<accession>Q1LCU1</accession>
<comment type="function">
    <text evidence="1">One of the essential components for the initiation of protein synthesis. Stabilizes the binding of IF-2 and IF-3 on the 30S subunit to which N-formylmethionyl-tRNA(fMet) subsequently binds. Helps modulate mRNA selection, yielding the 30S pre-initiation complex (PIC). Upon addition of the 50S ribosomal subunit IF-1, IF-2 and IF-3 are released leaving the mature 70S translation initiation complex.</text>
</comment>
<comment type="subunit">
    <text evidence="1">Component of the 30S ribosomal translation pre-initiation complex which assembles on the 30S ribosome in the order IF-2 and IF-3, IF-1 and N-formylmethionyl-tRNA(fMet); mRNA recruitment can occur at any time during PIC assembly.</text>
</comment>
<comment type="subcellular location">
    <subcellularLocation>
        <location evidence="1">Cytoplasm</location>
    </subcellularLocation>
</comment>
<comment type="similarity">
    <text evidence="1">Belongs to the IF-1 family.</text>
</comment>
<name>IF13_CUPMC</name>
<organism>
    <name type="scientific">Cupriavidus metallidurans (strain ATCC 43123 / DSM 2839 / NBRC 102507 / CH34)</name>
    <name type="common">Ralstonia metallidurans</name>
    <dbReference type="NCBI Taxonomy" id="266264"/>
    <lineage>
        <taxon>Bacteria</taxon>
        <taxon>Pseudomonadati</taxon>
        <taxon>Pseudomonadota</taxon>
        <taxon>Betaproteobacteria</taxon>
        <taxon>Burkholderiales</taxon>
        <taxon>Burkholderiaceae</taxon>
        <taxon>Cupriavidus</taxon>
    </lineage>
</organism>
<reference key="1">
    <citation type="journal article" date="2010" name="PLoS ONE">
        <title>The complete genome sequence of Cupriavidus metallidurans strain CH34, a master survivalist in harsh and anthropogenic environments.</title>
        <authorList>
            <person name="Janssen P.J."/>
            <person name="Van Houdt R."/>
            <person name="Moors H."/>
            <person name="Monsieurs P."/>
            <person name="Morin N."/>
            <person name="Michaux A."/>
            <person name="Benotmane M.A."/>
            <person name="Leys N."/>
            <person name="Vallaeys T."/>
            <person name="Lapidus A."/>
            <person name="Monchy S."/>
            <person name="Medigue C."/>
            <person name="Taghavi S."/>
            <person name="McCorkle S."/>
            <person name="Dunn J."/>
            <person name="van der Lelie D."/>
            <person name="Mergeay M."/>
        </authorList>
    </citation>
    <scope>NUCLEOTIDE SEQUENCE [LARGE SCALE GENOMIC DNA]</scope>
    <source>
        <strain>ATCC 43123 / DSM 2839 / NBRC 102507 / CH34</strain>
    </source>
</reference>
<gene>
    <name evidence="1" type="primary">infA3</name>
    <name type="ordered locus">Rmet_5176</name>
</gene>
<keyword id="KW-0963">Cytoplasm</keyword>
<keyword id="KW-0396">Initiation factor</keyword>
<keyword id="KW-0614">Plasmid</keyword>
<keyword id="KW-0648">Protein biosynthesis</keyword>
<keyword id="KW-1185">Reference proteome</keyword>
<keyword id="KW-0694">RNA-binding</keyword>
<keyword id="KW-0699">rRNA-binding</keyword>
<geneLocation type="plasmid">
    <name>megaplasmid CH34</name>
</geneLocation>
<protein>
    <recommendedName>
        <fullName evidence="1">Translation initiation factor IF-1 3</fullName>
    </recommendedName>
</protein>
<proteinExistence type="inferred from homology"/>